<name>ALG1_HUMAN</name>
<evidence type="ECO:0000250" key="1">
    <source>
        <dbReference type="UniProtKB" id="P16661"/>
    </source>
</evidence>
<evidence type="ECO:0000255" key="2"/>
<evidence type="ECO:0000256" key="3">
    <source>
        <dbReference type="SAM" id="MobiDB-lite"/>
    </source>
</evidence>
<evidence type="ECO:0000269" key="4">
    <source>
    </source>
</evidence>
<evidence type="ECO:0000269" key="5">
    <source>
    </source>
</evidence>
<evidence type="ECO:0000269" key="6">
    <source>
    </source>
</evidence>
<evidence type="ECO:0000269" key="7">
    <source>
    </source>
</evidence>
<evidence type="ECO:0000269" key="8">
    <source>
    </source>
</evidence>
<evidence type="ECO:0000269" key="9">
    <source>
    </source>
</evidence>
<evidence type="ECO:0000269" key="10">
    <source>
    </source>
</evidence>
<evidence type="ECO:0000303" key="11">
    <source>
    </source>
</evidence>
<evidence type="ECO:0000305" key="12"/>
<evidence type="ECO:0000305" key="13">
    <source>
    </source>
</evidence>
<evidence type="ECO:0000312" key="14">
    <source>
        <dbReference type="HGNC" id="HGNC:18294"/>
    </source>
</evidence>
<evidence type="ECO:0007744" key="15">
    <source>
    </source>
</evidence>
<evidence type="ECO:0007744" key="16">
    <source>
    </source>
</evidence>
<comment type="function">
    <text evidence="4 6 9">Mannosyltransferase that operates in the biosynthetic pathway of dolichol-linked oligosaccharides, the glycan precursors employed in protein asparagine (N)-glycosylation. The assembly of dolichol-linked oligosaccharides begins on the cytosolic side of the endoplasmic reticulum membrane and finishes in its lumen. The sequential addition of sugars to dolichol pyrophosphate produces dolichol-linked oligosaccharides containing fourteen sugars, including two GlcNAcs, nine mannoses and three glucoses. Once assembled, the oligosaccharide is transferred from the lipid to nascent proteins by oligosaccharyltransferases. Catalyzes, on the cytoplasmic face of the endoplasmic reticulum, the addition of the first mannose residues to the dolichol-linked oligosaccharide chain, to produce Man1GlcNAc(2)-PP-dolichol core oligosaccharide. Man1GlcNAc(2)-PP-dolichol is a substrate for ALG2, the following enzyme in the biosynthetic pathway.</text>
</comment>
<comment type="catalytic activity">
    <reaction evidence="6">
        <text>an N,N'-diacetylchitobiosyl-diphospho-di-trans,poly-cis-dolichol + GDP-alpha-D-mannose = a beta-D-Man-(1-&gt;4)-beta-D-GlcNAc-(1-&gt;4)-alpha-D-GlcNAc-diphospho-di-trans,poly-cis-dolichol + GDP + H(+)</text>
        <dbReference type="Rhea" id="RHEA:13865"/>
        <dbReference type="Rhea" id="RHEA-COMP:19510"/>
        <dbReference type="Rhea" id="RHEA-COMP:19511"/>
        <dbReference type="ChEBI" id="CHEBI:15378"/>
        <dbReference type="ChEBI" id="CHEBI:57269"/>
        <dbReference type="ChEBI" id="CHEBI:57527"/>
        <dbReference type="ChEBI" id="CHEBI:58189"/>
        <dbReference type="ChEBI" id="CHEBI:58472"/>
        <dbReference type="EC" id="2.4.1.142"/>
    </reaction>
    <physiologicalReaction direction="left-to-right" evidence="13">
        <dbReference type="Rhea" id="RHEA:13866"/>
    </physiologicalReaction>
</comment>
<comment type="pathway">
    <text evidence="6">Protein modification; protein glycosylation.</text>
</comment>
<comment type="subcellular location">
    <subcellularLocation>
        <location evidence="1">Endoplasmic reticulum membrane</location>
        <topology evidence="1">Single-pass membrane protein</topology>
    </subcellularLocation>
</comment>
<comment type="alternative products">
    <event type="alternative splicing"/>
    <isoform>
        <id>Q9BT22-1</id>
        <name>1</name>
        <sequence type="displayed"/>
    </isoform>
    <isoform>
        <id>Q9BT22-2</id>
        <name>2</name>
        <sequence type="described" ref="VSP_056931"/>
    </isoform>
</comment>
<comment type="disease" evidence="5 6 7 9">
    <disease id="DI-00343">
        <name>Congenital disorder of glycosylation 1K</name>
        <acronym>CDG1K</acronym>
        <description>A form of congenital disorder of glycosylation, a multisystem disorder caused by a defect in glycoprotein biosynthesis and characterized by under-glycosylated serum glycoproteins. Congenital disorders of glycosylation result in a wide variety of clinical features, such as defects in the nervous system development, psychomotor retardation, dysmorphic features, hypotonia, coagulation disorders, and immunodeficiency. The broad spectrum of features reflects the critical role of N-glycoproteins during embryonic development, differentiation, and maintenance of cell functions.</description>
        <dbReference type="MIM" id="608540"/>
    </disease>
    <text>The disease is caused by variants affecting the gene represented in this entry.</text>
</comment>
<comment type="similarity">
    <text evidence="12">Belongs to the glycosyltransferase group 1 family. Glycosyltransferase 33 subfamily.</text>
</comment>
<comment type="sequence caution" evidence="12">
    <conflict type="erroneous initiation">
        <sequence resource="EMBL-CDS" id="AAQ89432"/>
    </conflict>
</comment>
<sequence>MAASCLVLLALCLLLPLLLLGGWKRWRRGRAARHVVAVVLGDVGRSPRMQYHALSLAMHGFSVTLLGFCNSKPHDELLQNNRIQIVGLTELQSLAVGPRVFQYGVKVVLQAMYLLWKLMWREPGAYIFLQNPPGLPSIAVCWFVGCLCGSKLVIDWHNYGYSIMGLVHGPNHPLVLLAKWYEKFFGRLSHLNLCVTNAMREDLADNWHIRAVTVYDKPASFFKETPLDLQHRLFMKLGSMHSPFRARSEPEDPVTERSAFTERDAGSGLVTRLRERPALLVSSTSWTEDEDFSILLAALEKFEQLTLDGHNLPSLVCVITGKGPLREYYSRLIHQKHFQHIQVCTPWLEAEDYPLLLGSADLGVCLHTSSSGLDLPMKVVDMFGCCLPVCAVNFKCLHELVKHEENGLVFEDSEELAAQLQMLFSNFPDPAGKLNQFRKNLRESQQLRWDESWVQTVLPLVMDT</sequence>
<dbReference type="EC" id="2.4.1.142" evidence="6"/>
<dbReference type="EMBL" id="AB019038">
    <property type="protein sequence ID" value="BAA90748.1"/>
    <property type="molecule type" value="mRNA"/>
</dbReference>
<dbReference type="EMBL" id="AK298144">
    <property type="protein sequence ID" value="BAG60420.1"/>
    <property type="molecule type" value="mRNA"/>
</dbReference>
<dbReference type="EMBL" id="AK075373">
    <property type="protein sequence ID" value="BAC11576.1"/>
    <property type="molecule type" value="mRNA"/>
</dbReference>
<dbReference type="EMBL" id="AC026458">
    <property type="status" value="NOT_ANNOTATED_CDS"/>
    <property type="molecule type" value="Genomic_DNA"/>
</dbReference>
<dbReference type="EMBL" id="BC004402">
    <property type="protein sequence ID" value="AAH04402.1"/>
    <property type="molecule type" value="mRNA"/>
</dbReference>
<dbReference type="EMBL" id="BC031095">
    <property type="protein sequence ID" value="AAH31095.1"/>
    <property type="molecule type" value="mRNA"/>
</dbReference>
<dbReference type="EMBL" id="AY359073">
    <property type="protein sequence ID" value="AAQ89432.1"/>
    <property type="status" value="ALT_INIT"/>
    <property type="molecule type" value="mRNA"/>
</dbReference>
<dbReference type="CCDS" id="CCDS10528.1">
    <molecule id="Q9BT22-1"/>
</dbReference>
<dbReference type="CCDS" id="CCDS81946.1">
    <molecule id="Q9BT22-2"/>
</dbReference>
<dbReference type="RefSeq" id="NP_001317433.1">
    <molecule id="Q9BT22-2"/>
    <property type="nucleotide sequence ID" value="NM_001330504.2"/>
</dbReference>
<dbReference type="RefSeq" id="NP_061982.3">
    <molecule id="Q9BT22-1"/>
    <property type="nucleotide sequence ID" value="NM_019109.4"/>
</dbReference>
<dbReference type="RefSeq" id="XP_016878947.1">
    <property type="nucleotide sequence ID" value="XM_017023458.1"/>
</dbReference>
<dbReference type="BioGRID" id="121033">
    <property type="interactions" value="63"/>
</dbReference>
<dbReference type="FunCoup" id="Q9BT22">
    <property type="interactions" value="2536"/>
</dbReference>
<dbReference type="IntAct" id="Q9BT22">
    <property type="interactions" value="23"/>
</dbReference>
<dbReference type="MINT" id="Q9BT22"/>
<dbReference type="STRING" id="9606.ENSP00000262374"/>
<dbReference type="CAZy" id="GT33">
    <property type="family name" value="Glycosyltransferase Family 33"/>
</dbReference>
<dbReference type="GlyGen" id="Q9BT22">
    <property type="glycosylation" value="1 site, 1 O-linked glycan (1 site)"/>
</dbReference>
<dbReference type="iPTMnet" id="Q9BT22"/>
<dbReference type="PhosphoSitePlus" id="Q9BT22"/>
<dbReference type="SwissPalm" id="Q9BT22"/>
<dbReference type="BioMuta" id="ALG1"/>
<dbReference type="DMDM" id="73921663"/>
<dbReference type="jPOST" id="Q9BT22"/>
<dbReference type="MassIVE" id="Q9BT22"/>
<dbReference type="PaxDb" id="9606-ENSP00000262374"/>
<dbReference type="PeptideAtlas" id="Q9BT22"/>
<dbReference type="ProteomicsDB" id="4740"/>
<dbReference type="ProteomicsDB" id="78943">
    <molecule id="Q9BT22-1"/>
</dbReference>
<dbReference type="Pumba" id="Q9BT22"/>
<dbReference type="Antibodypedia" id="24484">
    <property type="antibodies" value="140 antibodies from 26 providers"/>
</dbReference>
<dbReference type="DNASU" id="56052"/>
<dbReference type="Ensembl" id="ENST00000262374.10">
    <molecule id="Q9BT22-1"/>
    <property type="protein sequence ID" value="ENSP00000262374.5"/>
    <property type="gene ID" value="ENSG00000033011.14"/>
</dbReference>
<dbReference type="Ensembl" id="ENST00000544428.1">
    <molecule id="Q9BT22-2"/>
    <property type="protein sequence ID" value="ENSP00000440019.1"/>
    <property type="gene ID" value="ENSG00000033011.14"/>
</dbReference>
<dbReference type="Ensembl" id="ENST00000588623.5">
    <molecule id="Q9BT22-2"/>
    <property type="protein sequence ID" value="ENSP00000468118.1"/>
    <property type="gene ID" value="ENSG00000033011.14"/>
</dbReference>
<dbReference type="Ensembl" id="ENST00000683739.1">
    <molecule id="Q9BT22-2"/>
    <property type="protein sequence ID" value="ENSP00000507002.1"/>
    <property type="gene ID" value="ENSG00000033011.14"/>
</dbReference>
<dbReference type="GeneID" id="56052"/>
<dbReference type="KEGG" id="hsa:56052"/>
<dbReference type="MANE-Select" id="ENST00000262374.10">
    <property type="protein sequence ID" value="ENSP00000262374.5"/>
    <property type="RefSeq nucleotide sequence ID" value="NM_019109.5"/>
    <property type="RefSeq protein sequence ID" value="NP_061982.3"/>
</dbReference>
<dbReference type="UCSC" id="uc002cyj.4">
    <molecule id="Q9BT22-1"/>
    <property type="organism name" value="human"/>
</dbReference>
<dbReference type="AGR" id="HGNC:18294"/>
<dbReference type="CTD" id="56052"/>
<dbReference type="DisGeNET" id="56052"/>
<dbReference type="GeneCards" id="ALG1"/>
<dbReference type="HGNC" id="HGNC:18294">
    <property type="gene designation" value="ALG1"/>
</dbReference>
<dbReference type="HPA" id="ENSG00000033011">
    <property type="expression patterns" value="Low tissue specificity"/>
</dbReference>
<dbReference type="MalaCards" id="ALG1"/>
<dbReference type="MIM" id="605907">
    <property type="type" value="gene"/>
</dbReference>
<dbReference type="MIM" id="608540">
    <property type="type" value="phenotype"/>
</dbReference>
<dbReference type="neXtProt" id="NX_Q9BT22"/>
<dbReference type="OpenTargets" id="ENSG00000033011"/>
<dbReference type="Orphanet" id="79327">
    <property type="disease" value="ALG1-CDG"/>
</dbReference>
<dbReference type="PharmGKB" id="PA134979319"/>
<dbReference type="VEuPathDB" id="HostDB:ENSG00000033011"/>
<dbReference type="eggNOG" id="KOG2941">
    <property type="taxonomic scope" value="Eukaryota"/>
</dbReference>
<dbReference type="GeneTree" id="ENSGT00390000008647"/>
<dbReference type="HOGENOM" id="CLU_012079_0_0_1"/>
<dbReference type="InParanoid" id="Q9BT22"/>
<dbReference type="OMA" id="CKLIIDW"/>
<dbReference type="OrthoDB" id="614844at2759"/>
<dbReference type="PAN-GO" id="Q9BT22">
    <property type="GO annotations" value="3 GO annotations based on evolutionary models"/>
</dbReference>
<dbReference type="PhylomeDB" id="Q9BT22"/>
<dbReference type="TreeFam" id="TF314121"/>
<dbReference type="BRENDA" id="2.4.1.142">
    <property type="organism ID" value="2681"/>
</dbReference>
<dbReference type="PathwayCommons" id="Q9BT22"/>
<dbReference type="Reactome" id="R-HSA-446193">
    <property type="pathway name" value="Biosynthesis of the N-glycan precursor (dolichol lipid-linked oligosaccharide, LLO) and transfer to a nascent protein"/>
</dbReference>
<dbReference type="Reactome" id="R-HSA-4549380">
    <property type="pathway name" value="Defective ALG1 causes CDG-1k"/>
</dbReference>
<dbReference type="SignaLink" id="Q9BT22"/>
<dbReference type="SIGNOR" id="Q9BT22"/>
<dbReference type="UniPathway" id="UPA00378"/>
<dbReference type="BioGRID-ORCS" id="56052">
    <property type="hits" value="729 hits in 1169 CRISPR screens"/>
</dbReference>
<dbReference type="ChiTaRS" id="ALG1">
    <property type="organism name" value="human"/>
</dbReference>
<dbReference type="GeneWiki" id="ALG1"/>
<dbReference type="GenomeRNAi" id="56052"/>
<dbReference type="Pharos" id="Q9BT22">
    <property type="development level" value="Tbio"/>
</dbReference>
<dbReference type="PRO" id="PR:Q9BT22"/>
<dbReference type="Proteomes" id="UP000005640">
    <property type="component" value="Chromosome 16"/>
</dbReference>
<dbReference type="RNAct" id="Q9BT22">
    <property type="molecule type" value="protein"/>
</dbReference>
<dbReference type="Bgee" id="ENSG00000033011">
    <property type="expression patterns" value="Expressed in stromal cell of endometrium and 120 other cell types or tissues"/>
</dbReference>
<dbReference type="ExpressionAtlas" id="Q9BT22">
    <property type="expression patterns" value="baseline and differential"/>
</dbReference>
<dbReference type="GO" id="GO:0098554">
    <property type="term" value="C:cytoplasmic side of endoplasmic reticulum membrane"/>
    <property type="evidence" value="ECO:0000250"/>
    <property type="project" value="UniProtKB"/>
</dbReference>
<dbReference type="GO" id="GO:0005783">
    <property type="term" value="C:endoplasmic reticulum"/>
    <property type="evidence" value="ECO:0000318"/>
    <property type="project" value="GO_Central"/>
</dbReference>
<dbReference type="GO" id="GO:0005789">
    <property type="term" value="C:endoplasmic reticulum membrane"/>
    <property type="evidence" value="ECO:0000304"/>
    <property type="project" value="Reactome"/>
</dbReference>
<dbReference type="GO" id="GO:0016020">
    <property type="term" value="C:membrane"/>
    <property type="evidence" value="ECO:0007005"/>
    <property type="project" value="UniProtKB"/>
</dbReference>
<dbReference type="GO" id="GO:0004578">
    <property type="term" value="F:chitobiosyldiphosphodolichol beta-mannosyltransferase activity"/>
    <property type="evidence" value="ECO:0000314"/>
    <property type="project" value="UniProtKB"/>
</dbReference>
<dbReference type="GO" id="GO:0000030">
    <property type="term" value="F:mannosyltransferase activity"/>
    <property type="evidence" value="ECO:0000318"/>
    <property type="project" value="GO_Central"/>
</dbReference>
<dbReference type="GO" id="GO:0006488">
    <property type="term" value="P:dolichol-linked oligosaccharide biosynthetic process"/>
    <property type="evidence" value="ECO:0000314"/>
    <property type="project" value="UniProtKB"/>
</dbReference>
<dbReference type="GO" id="GO:0006486">
    <property type="term" value="P:protein glycosylation"/>
    <property type="evidence" value="ECO:0000318"/>
    <property type="project" value="GO_Central"/>
</dbReference>
<dbReference type="GO" id="GO:0006487">
    <property type="term" value="P:protein N-linked glycosylation"/>
    <property type="evidence" value="ECO:0000314"/>
    <property type="project" value="UniProtKB"/>
</dbReference>
<dbReference type="CDD" id="cd03816">
    <property type="entry name" value="GT33_ALG1-like"/>
    <property type="match status" value="1"/>
</dbReference>
<dbReference type="FunFam" id="3.40.50.2000:FF:000096">
    <property type="entry name" value="ALG1, chitobiosyldiphosphodolichol beta-mannosyltransferase"/>
    <property type="match status" value="1"/>
</dbReference>
<dbReference type="Gene3D" id="3.40.50.2000">
    <property type="entry name" value="Glycogen Phosphorylase B"/>
    <property type="match status" value="1"/>
</dbReference>
<dbReference type="InterPro" id="IPR026051">
    <property type="entry name" value="ALG1-like"/>
</dbReference>
<dbReference type="InterPro" id="IPR001296">
    <property type="entry name" value="Glyco_trans_1"/>
</dbReference>
<dbReference type="PANTHER" id="PTHR13036">
    <property type="entry name" value="BETA1,4 MANNOSYLTRANSFERASE"/>
    <property type="match status" value="1"/>
</dbReference>
<dbReference type="PANTHER" id="PTHR13036:SF1">
    <property type="entry name" value="CHITOBIOSYLDIPHOSPHODOLICHOL BETA-MANNOSYLTRANSFERASE"/>
    <property type="match status" value="1"/>
</dbReference>
<dbReference type="Pfam" id="PF00534">
    <property type="entry name" value="Glycos_transf_1"/>
    <property type="match status" value="1"/>
</dbReference>
<dbReference type="SUPFAM" id="SSF53756">
    <property type="entry name" value="UDP-Glycosyltransferase/glycogen phosphorylase"/>
    <property type="match status" value="1"/>
</dbReference>
<organism>
    <name type="scientific">Homo sapiens</name>
    <name type="common">Human</name>
    <dbReference type="NCBI Taxonomy" id="9606"/>
    <lineage>
        <taxon>Eukaryota</taxon>
        <taxon>Metazoa</taxon>
        <taxon>Chordata</taxon>
        <taxon>Craniata</taxon>
        <taxon>Vertebrata</taxon>
        <taxon>Euteleostomi</taxon>
        <taxon>Mammalia</taxon>
        <taxon>Eutheria</taxon>
        <taxon>Euarchontoglires</taxon>
        <taxon>Primates</taxon>
        <taxon>Haplorrhini</taxon>
        <taxon>Catarrhini</taxon>
        <taxon>Hominidae</taxon>
        <taxon>Homo</taxon>
    </lineage>
</organism>
<reference key="1">
    <citation type="journal article" date="2000" name="Glycobiology">
        <title>Cloning of the human cDNA which can complement the defect of the yeast mannosyltransferase I-deficient mutant alg 1.</title>
        <authorList>
            <person name="Takahashi T."/>
            <person name="Honda R."/>
            <person name="Nishikawa Y."/>
        </authorList>
    </citation>
    <scope>NUCLEOTIDE SEQUENCE [MRNA] (ISOFORM 1)</scope>
    <scope>FUNCTION</scope>
    <source>
        <tissue>Fetal brain</tissue>
    </source>
</reference>
<reference key="2">
    <citation type="journal article" date="2004" name="Nat. Genet.">
        <title>Complete sequencing and characterization of 21,243 full-length human cDNAs.</title>
        <authorList>
            <person name="Ota T."/>
            <person name="Suzuki Y."/>
            <person name="Nishikawa T."/>
            <person name="Otsuki T."/>
            <person name="Sugiyama T."/>
            <person name="Irie R."/>
            <person name="Wakamatsu A."/>
            <person name="Hayashi K."/>
            <person name="Sato H."/>
            <person name="Nagai K."/>
            <person name="Kimura K."/>
            <person name="Makita H."/>
            <person name="Sekine M."/>
            <person name="Obayashi M."/>
            <person name="Nishi T."/>
            <person name="Shibahara T."/>
            <person name="Tanaka T."/>
            <person name="Ishii S."/>
            <person name="Yamamoto J."/>
            <person name="Saito K."/>
            <person name="Kawai Y."/>
            <person name="Isono Y."/>
            <person name="Nakamura Y."/>
            <person name="Nagahari K."/>
            <person name="Murakami K."/>
            <person name="Yasuda T."/>
            <person name="Iwayanagi T."/>
            <person name="Wagatsuma M."/>
            <person name="Shiratori A."/>
            <person name="Sudo H."/>
            <person name="Hosoiri T."/>
            <person name="Kaku Y."/>
            <person name="Kodaira H."/>
            <person name="Kondo H."/>
            <person name="Sugawara M."/>
            <person name="Takahashi M."/>
            <person name="Kanda K."/>
            <person name="Yokoi T."/>
            <person name="Furuya T."/>
            <person name="Kikkawa E."/>
            <person name="Omura Y."/>
            <person name="Abe K."/>
            <person name="Kamihara K."/>
            <person name="Katsuta N."/>
            <person name="Sato K."/>
            <person name="Tanikawa M."/>
            <person name="Yamazaki M."/>
            <person name="Ninomiya K."/>
            <person name="Ishibashi T."/>
            <person name="Yamashita H."/>
            <person name="Murakawa K."/>
            <person name="Fujimori K."/>
            <person name="Tanai H."/>
            <person name="Kimata M."/>
            <person name="Watanabe M."/>
            <person name="Hiraoka S."/>
            <person name="Chiba Y."/>
            <person name="Ishida S."/>
            <person name="Ono Y."/>
            <person name="Takiguchi S."/>
            <person name="Watanabe S."/>
            <person name="Yosida M."/>
            <person name="Hotuta T."/>
            <person name="Kusano J."/>
            <person name="Kanehori K."/>
            <person name="Takahashi-Fujii A."/>
            <person name="Hara H."/>
            <person name="Tanase T.-O."/>
            <person name="Nomura Y."/>
            <person name="Togiya S."/>
            <person name="Komai F."/>
            <person name="Hara R."/>
            <person name="Takeuchi K."/>
            <person name="Arita M."/>
            <person name="Imose N."/>
            <person name="Musashino K."/>
            <person name="Yuuki H."/>
            <person name="Oshima A."/>
            <person name="Sasaki N."/>
            <person name="Aotsuka S."/>
            <person name="Yoshikawa Y."/>
            <person name="Matsunawa H."/>
            <person name="Ichihara T."/>
            <person name="Shiohata N."/>
            <person name="Sano S."/>
            <person name="Moriya S."/>
            <person name="Momiyama H."/>
            <person name="Satoh N."/>
            <person name="Takami S."/>
            <person name="Terashima Y."/>
            <person name="Suzuki O."/>
            <person name="Nakagawa S."/>
            <person name="Senoh A."/>
            <person name="Mizoguchi H."/>
            <person name="Goto Y."/>
            <person name="Shimizu F."/>
            <person name="Wakebe H."/>
            <person name="Hishigaki H."/>
            <person name="Watanabe T."/>
            <person name="Sugiyama A."/>
            <person name="Takemoto M."/>
            <person name="Kawakami B."/>
            <person name="Yamazaki M."/>
            <person name="Watanabe K."/>
            <person name="Kumagai A."/>
            <person name="Itakura S."/>
            <person name="Fukuzumi Y."/>
            <person name="Fujimori Y."/>
            <person name="Komiyama M."/>
            <person name="Tashiro H."/>
            <person name="Tanigami A."/>
            <person name="Fujiwara T."/>
            <person name="Ono T."/>
            <person name="Yamada K."/>
            <person name="Fujii Y."/>
            <person name="Ozaki K."/>
            <person name="Hirao M."/>
            <person name="Ohmori Y."/>
            <person name="Kawabata A."/>
            <person name="Hikiji T."/>
            <person name="Kobatake N."/>
            <person name="Inagaki H."/>
            <person name="Ikema Y."/>
            <person name="Okamoto S."/>
            <person name="Okitani R."/>
            <person name="Kawakami T."/>
            <person name="Noguchi S."/>
            <person name="Itoh T."/>
            <person name="Shigeta K."/>
            <person name="Senba T."/>
            <person name="Matsumura K."/>
            <person name="Nakajima Y."/>
            <person name="Mizuno T."/>
            <person name="Morinaga M."/>
            <person name="Sasaki M."/>
            <person name="Togashi T."/>
            <person name="Oyama M."/>
            <person name="Hata H."/>
            <person name="Watanabe M."/>
            <person name="Komatsu T."/>
            <person name="Mizushima-Sugano J."/>
            <person name="Satoh T."/>
            <person name="Shirai Y."/>
            <person name="Takahashi Y."/>
            <person name="Nakagawa K."/>
            <person name="Okumura K."/>
            <person name="Nagase T."/>
            <person name="Nomura N."/>
            <person name="Kikuchi H."/>
            <person name="Masuho Y."/>
            <person name="Yamashita R."/>
            <person name="Nakai K."/>
            <person name="Yada T."/>
            <person name="Nakamura Y."/>
            <person name="Ohara O."/>
            <person name="Isogai T."/>
            <person name="Sugano S."/>
        </authorList>
    </citation>
    <scope>NUCLEOTIDE SEQUENCE [LARGE SCALE MRNA] (ISOFORM 2)</scope>
</reference>
<reference key="3">
    <citation type="journal article" date="2005" name="DNA Res.">
        <title>Signal sequence and keyword trap in silico for selection of full-length human cDNAs encoding secretion or membrane proteins from oligo-capped cDNA libraries.</title>
        <authorList>
            <person name="Otsuki T."/>
            <person name="Ota T."/>
            <person name="Nishikawa T."/>
            <person name="Hayashi K."/>
            <person name="Suzuki Y."/>
            <person name="Yamamoto J."/>
            <person name="Wakamatsu A."/>
            <person name="Kimura K."/>
            <person name="Sakamoto K."/>
            <person name="Hatano N."/>
            <person name="Kawai Y."/>
            <person name="Ishii S."/>
            <person name="Saito K."/>
            <person name="Kojima S."/>
            <person name="Sugiyama T."/>
            <person name="Ono T."/>
            <person name="Okano K."/>
            <person name="Yoshikawa Y."/>
            <person name="Aotsuka S."/>
            <person name="Sasaki N."/>
            <person name="Hattori A."/>
            <person name="Okumura K."/>
            <person name="Nagai K."/>
            <person name="Sugano S."/>
            <person name="Isogai T."/>
        </authorList>
    </citation>
    <scope>NUCLEOTIDE SEQUENCE [LARGE SCALE MRNA] (ISOFORM 1)</scope>
    <source>
        <tissue>Teratocarcinoma</tissue>
    </source>
</reference>
<reference key="4">
    <citation type="journal article" date="2004" name="Nature">
        <title>The sequence and analysis of duplication-rich human chromosome 16.</title>
        <authorList>
            <person name="Martin J."/>
            <person name="Han C."/>
            <person name="Gordon L.A."/>
            <person name="Terry A."/>
            <person name="Prabhakar S."/>
            <person name="She X."/>
            <person name="Xie G."/>
            <person name="Hellsten U."/>
            <person name="Chan Y.M."/>
            <person name="Altherr M."/>
            <person name="Couronne O."/>
            <person name="Aerts A."/>
            <person name="Bajorek E."/>
            <person name="Black S."/>
            <person name="Blumer H."/>
            <person name="Branscomb E."/>
            <person name="Brown N.C."/>
            <person name="Bruno W.J."/>
            <person name="Buckingham J.M."/>
            <person name="Callen D.F."/>
            <person name="Campbell C.S."/>
            <person name="Campbell M.L."/>
            <person name="Campbell E.W."/>
            <person name="Caoile C."/>
            <person name="Challacombe J.F."/>
            <person name="Chasteen L.A."/>
            <person name="Chertkov O."/>
            <person name="Chi H.C."/>
            <person name="Christensen M."/>
            <person name="Clark L.M."/>
            <person name="Cohn J.D."/>
            <person name="Denys M."/>
            <person name="Detter J.C."/>
            <person name="Dickson M."/>
            <person name="Dimitrijevic-Bussod M."/>
            <person name="Escobar J."/>
            <person name="Fawcett J.J."/>
            <person name="Flowers D."/>
            <person name="Fotopulos D."/>
            <person name="Glavina T."/>
            <person name="Gomez M."/>
            <person name="Gonzales E."/>
            <person name="Goodstein D."/>
            <person name="Goodwin L.A."/>
            <person name="Grady D.L."/>
            <person name="Grigoriev I."/>
            <person name="Groza M."/>
            <person name="Hammon N."/>
            <person name="Hawkins T."/>
            <person name="Haydu L."/>
            <person name="Hildebrand C.E."/>
            <person name="Huang W."/>
            <person name="Israni S."/>
            <person name="Jett J."/>
            <person name="Jewett P.B."/>
            <person name="Kadner K."/>
            <person name="Kimball H."/>
            <person name="Kobayashi A."/>
            <person name="Krawczyk M.-C."/>
            <person name="Leyba T."/>
            <person name="Longmire J.L."/>
            <person name="Lopez F."/>
            <person name="Lou Y."/>
            <person name="Lowry S."/>
            <person name="Ludeman T."/>
            <person name="Manohar C.F."/>
            <person name="Mark G.A."/>
            <person name="McMurray K.L."/>
            <person name="Meincke L.J."/>
            <person name="Morgan J."/>
            <person name="Moyzis R.K."/>
            <person name="Mundt M.O."/>
            <person name="Munk A.C."/>
            <person name="Nandkeshwar R.D."/>
            <person name="Pitluck S."/>
            <person name="Pollard M."/>
            <person name="Predki P."/>
            <person name="Parson-Quintana B."/>
            <person name="Ramirez L."/>
            <person name="Rash S."/>
            <person name="Retterer J."/>
            <person name="Ricke D.O."/>
            <person name="Robinson D.L."/>
            <person name="Rodriguez A."/>
            <person name="Salamov A."/>
            <person name="Saunders E.H."/>
            <person name="Scott D."/>
            <person name="Shough T."/>
            <person name="Stallings R.L."/>
            <person name="Stalvey M."/>
            <person name="Sutherland R.D."/>
            <person name="Tapia R."/>
            <person name="Tesmer J.G."/>
            <person name="Thayer N."/>
            <person name="Thompson L.S."/>
            <person name="Tice H."/>
            <person name="Torney D.C."/>
            <person name="Tran-Gyamfi M."/>
            <person name="Tsai M."/>
            <person name="Ulanovsky L.E."/>
            <person name="Ustaszewska A."/>
            <person name="Vo N."/>
            <person name="White P.S."/>
            <person name="Williams A.L."/>
            <person name="Wills P.L."/>
            <person name="Wu J.-R."/>
            <person name="Wu K."/>
            <person name="Yang J."/>
            <person name="DeJong P."/>
            <person name="Bruce D."/>
            <person name="Doggett N.A."/>
            <person name="Deaven L."/>
            <person name="Schmutz J."/>
            <person name="Grimwood J."/>
            <person name="Richardson P."/>
            <person name="Rokhsar D.S."/>
            <person name="Eichler E.E."/>
            <person name="Gilna P."/>
            <person name="Lucas S.M."/>
            <person name="Myers R.M."/>
            <person name="Rubin E.M."/>
            <person name="Pennacchio L.A."/>
        </authorList>
    </citation>
    <scope>NUCLEOTIDE SEQUENCE [LARGE SCALE GENOMIC DNA]</scope>
</reference>
<reference key="5">
    <citation type="journal article" date="2004" name="Genome Res.">
        <title>The status, quality, and expansion of the NIH full-length cDNA project: the Mammalian Gene Collection (MGC).</title>
        <authorList>
            <consortium name="The MGC Project Team"/>
        </authorList>
    </citation>
    <scope>NUCLEOTIDE SEQUENCE [LARGE SCALE MRNA] (ISOFORM 1)</scope>
    <scope>VARIANTS ASN-267; MET-325 AND ARG-455</scope>
    <source>
        <tissue>Brain</tissue>
    </source>
</reference>
<reference key="6">
    <citation type="journal article" date="2003" name="Genome Res.">
        <title>The secreted protein discovery initiative (SPDI), a large-scale effort to identify novel human secreted and transmembrane proteins: a bioinformatics assessment.</title>
        <authorList>
            <person name="Clark H.F."/>
            <person name="Gurney A.L."/>
            <person name="Abaya E."/>
            <person name="Baker K."/>
            <person name="Baldwin D.T."/>
            <person name="Brush J."/>
            <person name="Chen J."/>
            <person name="Chow B."/>
            <person name="Chui C."/>
            <person name="Crowley C."/>
            <person name="Currell B."/>
            <person name="Deuel B."/>
            <person name="Dowd P."/>
            <person name="Eaton D."/>
            <person name="Foster J.S."/>
            <person name="Grimaldi C."/>
            <person name="Gu Q."/>
            <person name="Hass P.E."/>
            <person name="Heldens S."/>
            <person name="Huang A."/>
            <person name="Kim H.S."/>
            <person name="Klimowski L."/>
            <person name="Jin Y."/>
            <person name="Johnson S."/>
            <person name="Lee J."/>
            <person name="Lewis L."/>
            <person name="Liao D."/>
            <person name="Mark M.R."/>
            <person name="Robbie E."/>
            <person name="Sanchez C."/>
            <person name="Schoenfeld J."/>
            <person name="Seshagiri S."/>
            <person name="Simmons L."/>
            <person name="Singh J."/>
            <person name="Smith V."/>
            <person name="Stinson J."/>
            <person name="Vagts A."/>
            <person name="Vandlen R.L."/>
            <person name="Watanabe C."/>
            <person name="Wieand D."/>
            <person name="Woods K."/>
            <person name="Xie M.-H."/>
            <person name="Yansura D.G."/>
            <person name="Yi S."/>
            <person name="Yu G."/>
            <person name="Yuan J."/>
            <person name="Zhang M."/>
            <person name="Zhang Z."/>
            <person name="Goddard A.D."/>
            <person name="Wood W.I."/>
            <person name="Godowski P.J."/>
            <person name="Gray A.M."/>
        </authorList>
    </citation>
    <scope>NUCLEOTIDE SEQUENCE [LARGE SCALE MRNA] OF 2-464 (ISOFORM 1)</scope>
</reference>
<reference key="7">
    <citation type="journal article" date="2008" name="Mol. Cell">
        <title>Kinase-selective enrichment enables quantitative phosphoproteomics of the kinome across the cell cycle.</title>
        <authorList>
            <person name="Daub H."/>
            <person name="Olsen J.V."/>
            <person name="Bairlein M."/>
            <person name="Gnad F."/>
            <person name="Oppermann F.S."/>
            <person name="Korner R."/>
            <person name="Greff Z."/>
            <person name="Keri G."/>
            <person name="Stemmann O."/>
            <person name="Mann M."/>
        </authorList>
    </citation>
    <scope>PHOSPHORYLATION [LARGE SCALE ANALYSIS] AT SER-242</scope>
    <scope>IDENTIFICATION BY MASS SPECTROMETRY [LARGE SCALE ANALYSIS]</scope>
    <source>
        <tissue>Cervix carcinoma</tissue>
    </source>
</reference>
<reference key="8">
    <citation type="journal article" date="2011" name="BMC Syst. Biol.">
        <title>Initial characterization of the human central proteome.</title>
        <authorList>
            <person name="Burkard T.R."/>
            <person name="Planyavsky M."/>
            <person name="Kaupe I."/>
            <person name="Breitwieser F.P."/>
            <person name="Buerckstuemmer T."/>
            <person name="Bennett K.L."/>
            <person name="Superti-Furga G."/>
            <person name="Colinge J."/>
        </authorList>
    </citation>
    <scope>IDENTIFICATION BY MASS SPECTROMETRY [LARGE SCALE ANALYSIS]</scope>
</reference>
<reference key="9">
    <citation type="journal article" date="2013" name="J. Proteome Res.">
        <title>Toward a comprehensive characterization of a human cancer cell phosphoproteome.</title>
        <authorList>
            <person name="Zhou H."/>
            <person name="Di Palma S."/>
            <person name="Preisinger C."/>
            <person name="Peng M."/>
            <person name="Polat A.N."/>
            <person name="Heck A.J."/>
            <person name="Mohammed S."/>
        </authorList>
    </citation>
    <scope>PHOSPHORYLATION [LARGE SCALE ANALYSIS] AT SER-242</scope>
    <scope>IDENTIFICATION BY MASS SPECTROMETRY [LARGE SCALE ANALYSIS]</scope>
    <source>
        <tissue>Cervix carcinoma</tissue>
    </source>
</reference>
<reference key="10">
    <citation type="journal article" date="2022" name="Commun. Biol.">
        <title>Topological and enzymatic analysis of human Alg2 mannosyltransferase reveals its role in lipid-linked oligosaccharide biosynthetic pathway.</title>
        <authorList>
            <person name="Xiang M.H."/>
            <person name="Xu X.X."/>
            <person name="Wang C.D."/>
            <person name="Chen S."/>
            <person name="Xu S."/>
            <person name="Xu X.Y."/>
            <person name="Dean N."/>
            <person name="Wang N."/>
            <person name="Gao X.D."/>
        </authorList>
    </citation>
    <scope>TOPOLOGY</scope>
</reference>
<reference key="11">
    <citation type="journal article" date="2004" name="Am. J. Hum. Genet.">
        <title>Deficiency of GDP-Man:GlcNAc2-PP-dolichol mannosyltransferase causes congenital disorder of glycosylation type Ik.</title>
        <authorList>
            <person name="Schwarz M."/>
            <person name="Thiel C."/>
            <person name="Luebbehusen J."/>
            <person name="Dorland B."/>
            <person name="de Koning T."/>
            <person name="von Figura K."/>
            <person name="Lehle L."/>
            <person name="Koerner C."/>
        </authorList>
    </citation>
    <scope>VARIANT CDG1K LEU-258</scope>
    <scope>FUNCTION</scope>
    <scope>CATALYTIC ACTIVITY</scope>
    <scope>PATHWAY</scope>
</reference>
<reference key="12">
    <citation type="journal article" date="2004" name="Am. J. Hum. Genet.">
        <title>Congenital disorder of glycosylation type Ik (CDG-Ik): a defect of mannosyltransferase I.</title>
        <authorList>
            <person name="Kranz C."/>
            <person name="Denecke J."/>
            <person name="Lehle L."/>
            <person name="Sohlbach K."/>
            <person name="Jeske S."/>
            <person name="Meinhardt F."/>
            <person name="Rossi R."/>
            <person name="Gudowius S."/>
            <person name="Marquardt T."/>
        </authorList>
    </citation>
    <scope>VARIANTS CDG1K LEU-258 AND PRO-342</scope>
</reference>
<reference key="13">
    <citation type="journal article" date="2004" name="Hum. Mol. Genet.">
        <title>Deficiency of the first mannosylation step in the N-glycosylation pathway causes congenital disorder of glycosylation type Ik.</title>
        <authorList>
            <person name="Grubenmann C.E."/>
            <person name="Frank C.G."/>
            <person name="Huelsmeier A.J."/>
            <person name="Schollen E."/>
            <person name="Matthijs G."/>
            <person name="Mayatepek E."/>
            <person name="Berger E.G."/>
            <person name="Aebi M."/>
            <person name="Hennet T."/>
        </authorList>
    </citation>
    <scope>VARIANTS CDG1K ARG-150 AND LEU-258</scope>
    <scope>VARIANT GLU-429</scope>
</reference>
<reference key="14">
    <citation type="journal article" date="2016" name="Hum. Mutat.">
        <title>ALG1-CDG: Clinical and Molecular Characterization of 39 Unreported Patients.</title>
        <authorList>
            <consortium name="University of Washington Center for Mendelian Genomics"/>
            <person name="Ng B.G."/>
            <person name="Shiryaev S.A."/>
            <person name="Rymen D."/>
            <person name="Eklund E.A."/>
            <person name="Raymond K."/>
            <person name="Kircher M."/>
            <person name="Abdenur J.E."/>
            <person name="Alehan F."/>
            <person name="Midro A.T."/>
            <person name="Bamshad M.J."/>
            <person name="Barone R."/>
            <person name="Berry G.T."/>
            <person name="Brumbaugh J.E."/>
            <person name="Buckingham K.J."/>
            <person name="Clarkson K."/>
            <person name="Cole F.S."/>
            <person name="O'Connor S."/>
            <person name="Cooper G.M."/>
            <person name="Van Coster R."/>
            <person name="Demmer L.A."/>
            <person name="Diogo L."/>
            <person name="Fay A.J."/>
            <person name="Ficicioglu C."/>
            <person name="Fiumara A."/>
            <person name="Gahl W.A."/>
            <person name="Ganetzky R."/>
            <person name="Goel H."/>
            <person name="Harshman L.A."/>
            <person name="He M."/>
            <person name="Jaeken J."/>
            <person name="James P.M."/>
            <person name="Katz D."/>
            <person name="Keldermans L."/>
            <person name="Kibaek M."/>
            <person name="Kornberg A.J."/>
            <person name="Lachlan K."/>
            <person name="Lam C."/>
            <person name="Yaplito-Lee J."/>
            <person name="Nickerson D.A."/>
            <person name="Peters H.L."/>
            <person name="Race V."/>
            <person name="Regal L."/>
            <person name="Rush J.S."/>
            <person name="Rutledge S.L."/>
            <person name="Shendure J."/>
            <person name="Souche E."/>
            <person name="Sparks S.E."/>
            <person name="Trapane P."/>
            <person name="Sanchez-Valle A."/>
            <person name="Vilain E."/>
            <person name="Voello A."/>
            <person name="Waechter C.J."/>
            <person name="Wang R.Y."/>
            <person name="Wolfe L.A."/>
            <person name="Wong D.A."/>
            <person name="Wood T."/>
            <person name="Yang A.C."/>
            <person name="Matthijs G."/>
            <person name="Freeze H.H."/>
        </authorList>
    </citation>
    <scope>INVOLVEMENT IN CDG1K</scope>
    <scope>FUNCTION</scope>
    <scope>VARIANTS CDG1K ARG-50; PHE-71; LEU-74; VAL-88; LEU-98; PHE-114; ARG-150; SER-209; LEU-258; TRP-276; PHE-281; GLY-289; VAL-291; ASP-353; ARG-358; LEU-359; VAL-360; ALA-363; GLN-366; GLN-367; LYS-382; ARG-384; SER-388 AND TRP-438</scope>
    <scope>CHARACTERIZATION OF VARIANTS CDG1K ARG-50; PHE-71; LEU-74; VAL-88; LEU-98; PHE-114; ARG-150; SER-209; LEU-258; TRP-276; PHE-281; GLY-289; VAL-291; ASP-353; ARG-358; LEU-359; VAL-360; ALA-363; GLN-366; GLN-367; LYS-382; ARG-384; SER-388 AND TRP-438</scope>
    <scope>CHARACTERIZATION OF VARIANT ASN-267</scope>
</reference>
<protein>
    <recommendedName>
        <fullName evidence="12">Chitobiosyldiphosphodolichol beta-mannosyltransferase</fullName>
        <ecNumber evidence="6">2.4.1.142</ecNumber>
    </recommendedName>
    <alternativeName>
        <fullName>Asparagine-linked glycosylation protein 1 homolog</fullName>
    </alternativeName>
    <alternativeName>
        <fullName>Beta-1,4-mannosyltransferase</fullName>
    </alternativeName>
    <alternativeName>
        <fullName>GDP-Man:GlcNAc2-PP-dolichol mannosyltransferase</fullName>
    </alternativeName>
    <alternativeName>
        <fullName>GDP-mannose-dolichol diphosphochitobiose mannosyltransferase</fullName>
    </alternativeName>
    <alternativeName>
        <fullName>Mannosyltransferase-1</fullName>
        <shortName>MT-1</shortName>
        <shortName>hMat-1</shortName>
    </alternativeName>
</protein>
<keyword id="KW-0025">Alternative splicing</keyword>
<keyword id="KW-0900">Congenital disorder of glycosylation</keyword>
<keyword id="KW-0225">Disease variant</keyword>
<keyword id="KW-0256">Endoplasmic reticulum</keyword>
<keyword id="KW-0328">Glycosyltransferase</keyword>
<keyword id="KW-0472">Membrane</keyword>
<keyword id="KW-0597">Phosphoprotein</keyword>
<keyword id="KW-1267">Proteomics identification</keyword>
<keyword id="KW-1185">Reference proteome</keyword>
<keyword id="KW-0735">Signal-anchor</keyword>
<keyword id="KW-0808">Transferase</keyword>
<keyword id="KW-0812">Transmembrane</keyword>
<keyword id="KW-1133">Transmembrane helix</keyword>
<gene>
    <name evidence="14" type="primary">ALG1</name>
    <name type="synonym">HMAT1</name>
    <name type="synonym">HMT1</name>
    <name type="ORF">PSEC0061</name>
    <name type="ORF">UNQ861/PRO1870</name>
</gene>
<proteinExistence type="evidence at protein level"/>
<accession>Q9BT22</accession>
<accession>B4DP08</accession>
<accession>Q6UVZ9</accession>
<accession>Q8N5Y4</accession>
<accession>Q9P2Y2</accession>
<feature type="chain" id="PRO_0000080249" description="Chitobiosyldiphosphodolichol beta-mannosyltransferase">
    <location>
        <begin position="1"/>
        <end position="464"/>
    </location>
</feature>
<feature type="topological domain" description="Lumenal" evidence="10">
    <location>
        <begin position="1"/>
        <end position="2"/>
    </location>
</feature>
<feature type="transmembrane region" description="Helical" evidence="2">
    <location>
        <begin position="3"/>
        <end position="23"/>
    </location>
</feature>
<feature type="topological domain" description="Cytoplasmic" evidence="1">
    <location>
        <begin position="24"/>
        <end position="99"/>
    </location>
</feature>
<feature type="intramembrane region" description="Helical" evidence="2">
    <location>
        <begin position="100"/>
        <end position="120"/>
    </location>
</feature>
<feature type="topological domain" description="Cytoplasmic" evidence="1">
    <location>
        <begin position="121"/>
        <end position="464"/>
    </location>
</feature>
<feature type="region of interest" description="Disordered" evidence="3">
    <location>
        <begin position="243"/>
        <end position="262"/>
    </location>
</feature>
<feature type="modified residue" description="Phosphoserine" evidence="15 16">
    <location>
        <position position="242"/>
    </location>
</feature>
<feature type="splice variant" id="VSP_056931" description="In isoform 2." evidence="11">
    <location>
        <begin position="1"/>
        <end position="111"/>
    </location>
</feature>
<feature type="sequence variant" id="VAR_077187" description="In CDG1K; decreased function in protein glycosylation as shown by rescue assays in an ALG1-deficient yeast strain; dbSNP:rs794726944." evidence="9">
    <original>Q</original>
    <variation>R</variation>
    <location>
        <position position="50"/>
    </location>
</feature>
<feature type="sequence variant" id="VAR_077188" description="In CDG1K; decreased function in protein glycosylation as shown by rescue assays in an ALG1-deficient yeast strain; dbSNP:rs200605408." evidence="9">
    <original>S</original>
    <variation>F</variation>
    <location>
        <position position="71"/>
    </location>
</feature>
<feature type="sequence variant" id="VAR_077189" description="In CDG1K; decreased function in protein glycosylation as shown by rescue assays in an ALG1-deficient yeast strain; dbSNP:rs201337379." evidence="9">
    <original>H</original>
    <variation>L</variation>
    <location>
        <position position="74"/>
    </location>
</feature>
<feature type="sequence variant" id="VAR_077190" description="In CDG1K; decreased function in protein glycosylation as shown by rescue assays in an ALG1-deficient yeast strain; dbSNP:rs794727301." evidence="9">
    <original>L</original>
    <variation>V</variation>
    <location>
        <position position="88"/>
    </location>
</feature>
<feature type="sequence variant" id="VAR_077191" description="In CDG1K; decreased function in protein glycosylation as shown by rescue assays in an ALG1-deficient yeast strain; dbSNP:rs1596252105." evidence="9">
    <original>P</original>
    <variation>L</variation>
    <location>
        <position position="98"/>
    </location>
</feature>
<feature type="sequence variant" id="VAR_077192" description="In CDG1K; decreased function in protein glycosylation as shown by rescue assays in an ALG1-deficient yeast strain; dbSNP:rs1596252196." evidence="9">
    <original>L</original>
    <variation>F</variation>
    <location>
        <position position="114"/>
    </location>
</feature>
<feature type="sequence variant" id="VAR_023364" description="In CDG1K; decreased function in protein glycosylation as shown by rescue assays in an ALG1-deficient yeast strain; dbSNP:rs121908340." evidence="5 9">
    <original>S</original>
    <variation>R</variation>
    <location>
        <position position="150"/>
    </location>
</feature>
<feature type="sequence variant" id="VAR_077193" description="In CDG1K; decreased function in protein glycosylation as shown by rescue assays in an ALG1-deficient yeast strain; dbSNP:rs1596256204." evidence="9">
    <original>I</original>
    <variation>S</variation>
    <location>
        <position position="209"/>
    </location>
</feature>
<feature type="sequence variant" id="VAR_023365" description="In CDG1K; decreased function in protein glycosylation as shown by rescue assays in an ALG1-deficient yeast strain; dbSNP:rs28939378." evidence="5 6 7 9">
    <original>S</original>
    <variation>L</variation>
    <location>
        <position position="258"/>
    </location>
</feature>
<feature type="sequence variant" id="VAR_038425" description="No effect on function in protein glycosylation; dbSNP:rs17849848." evidence="8 9">
    <original>S</original>
    <variation>N</variation>
    <location>
        <position position="267"/>
    </location>
</feature>
<feature type="sequence variant" id="VAR_077194" description="In CDG1K; decreased function in protein glycosylation as shown by rescue assays in an ALG1-deficient yeast strain; dbSNP:rs151173406." evidence="9">
    <original>R</original>
    <variation>W</variation>
    <location>
        <position position="276"/>
    </location>
</feature>
<feature type="sequence variant" id="VAR_077195" description="In CDG1K; decreased function in protein glycosylation as shown by rescue assays in an ALG1-deficient yeast strain; dbSNP:rs553396382." evidence="9">
    <original>V</original>
    <variation>F</variation>
    <location>
        <position position="281"/>
    </location>
</feature>
<feature type="sequence variant" id="VAR_077196" description="In CDG1K; decreased function in protein glycosylation as shown by rescue assays in an ALG1-deficient yeast strain; dbSNP:rs1180515976." evidence="9">
    <original>D</original>
    <variation>G</variation>
    <location>
        <position position="289"/>
    </location>
</feature>
<feature type="sequence variant" id="VAR_077197" description="In CDG1K; decreased function in protein glycosylation as shown by rescue assays in an ALG1-deficient yeast strain; dbSNP:rs192564717." evidence="9">
    <original>D</original>
    <variation>V</variation>
    <location>
        <position position="291"/>
    </location>
</feature>
<feature type="sequence variant" id="VAR_038426" description="In dbSNP:rs17852920." evidence="8">
    <original>L</original>
    <variation>M</variation>
    <location>
        <position position="325"/>
    </location>
</feature>
<feature type="sequence variant" id="VAR_023366" description="In CDG1K; decreased function in protein glycosylation as shown by rescue assays in an ALG1-deficient yeast strain; dbSNP:rs267606651." evidence="7">
    <original>Q</original>
    <variation>P</variation>
    <location>
        <position position="342"/>
    </location>
</feature>
<feature type="sequence variant" id="VAR_077198" description="In CDG1K; decreased function in protein glycosylation as shown by rescue assays in an ALG1-deficient yeast strain; dbSNP:rs1596259672." evidence="9">
    <original>Y</original>
    <variation>D</variation>
    <location>
        <position position="353"/>
    </location>
</feature>
<feature type="sequence variant" id="VAR_077199" description="In CDG1K; decreased function in protein glycosylation as shown by rescue assays in an ALG1-deficient yeast strain; dbSNP:rs886042742." evidence="9">
    <original>G</original>
    <variation>R</variation>
    <location>
        <position position="358"/>
    </location>
</feature>
<feature type="sequence variant" id="VAR_077200" description="In CDG1K; decreased function in protein glycosylation as shown by rescue assays in an ALG1-deficient yeast strain; dbSNP:rs1299775990." evidence="9">
    <original>S</original>
    <variation>L</variation>
    <location>
        <position position="359"/>
    </location>
</feature>
<feature type="sequence variant" id="VAR_077201" description="In CDG1K; decreased function in protein glycosylation as shown by rescue assays in an ALG1-deficient yeast strain; dbSNP:rs398124348." evidence="9">
    <original>A</original>
    <variation>V</variation>
    <location>
        <position position="360"/>
    </location>
</feature>
<feature type="sequence variant" id="VAR_077202" description="In CDG1K; decreased function in protein glycosylation as shown by rescue assays in an ALG1-deficient yeast strain; dbSNP:rs1596261161." evidence="9">
    <original>G</original>
    <variation>A</variation>
    <location>
        <position position="363"/>
    </location>
</feature>
<feature type="sequence variant" id="VAR_077203" description="In CDG1K; decreased function in protein glycosylation as shown by rescue assays in an ALG1-deficient yeast strain; dbSNP:rs1596261208." evidence="9">
    <original>L</original>
    <variation>Q</variation>
    <location>
        <position position="366"/>
    </location>
</feature>
<feature type="sequence variant" id="VAR_077204" description="In CDG1K; decreased function in protein glycosylation as shown by rescue assays in an ALG1-deficient yeast strain; dbSNP:rs1428414601." evidence="9">
    <original>H</original>
    <variation>Q</variation>
    <location>
        <position position="367"/>
    </location>
</feature>
<feature type="sequence variant" id="VAR_077205" description="In CDG1K; decreased function in protein glycosylation as shown by rescue assays in an ALG1-deficient yeast strain; dbSNP:rs1596261268." evidence="9">
    <original>M</original>
    <variation>K</variation>
    <location>
        <position position="382"/>
    </location>
</feature>
<feature type="sequence variant" id="VAR_077206" description="In CDG1K; decreased function in protein glycosylation as shown by rescue assays in an ALG1-deficient yeast strain; dbSNP:rs1057520122." evidence="9">
    <original>G</original>
    <variation>R</variation>
    <location>
        <position position="384"/>
    </location>
</feature>
<feature type="sequence variant" id="VAR_077207" description="In CDG1K; decreased function in protein glycosylation as shown by rescue assays in an ALG1-deficient yeast strain; dbSNP:rs398124349." evidence="9">
    <original>P</original>
    <variation>S</variation>
    <location>
        <position position="388"/>
    </location>
</feature>
<feature type="sequence variant" id="VAR_023367" description="No effect on function in protein glycosylation as shown by rescue assays in an ALG1-deficient yeast strain; dbSNP:rs9745522." evidence="5">
    <original>D</original>
    <variation>E</variation>
    <location>
        <position position="429"/>
    </location>
</feature>
<feature type="sequence variant" id="VAR_049350" description="In CDG1K; decreased function in protein glycosylation as shown by rescue assays in an ALG1-deficient yeast strain; dbSNP:rs16835020." evidence="9">
    <original>R</original>
    <variation>W</variation>
    <location>
        <position position="438"/>
    </location>
</feature>
<feature type="sequence variant" id="VAR_038427" description="In dbSNP:rs17856919." evidence="8">
    <original>Q</original>
    <variation>R</variation>
    <location>
        <position position="455"/>
    </location>
</feature>